<reference key="1">
    <citation type="journal article" date="1996" name="Science">
        <title>Complete genome sequence of the methanogenic archaeon, Methanococcus jannaschii.</title>
        <authorList>
            <person name="Bult C.J."/>
            <person name="White O."/>
            <person name="Olsen G.J."/>
            <person name="Zhou L."/>
            <person name="Fleischmann R.D."/>
            <person name="Sutton G.G."/>
            <person name="Blake J.A."/>
            <person name="FitzGerald L.M."/>
            <person name="Clayton R.A."/>
            <person name="Gocayne J.D."/>
            <person name="Kerlavage A.R."/>
            <person name="Dougherty B.A."/>
            <person name="Tomb J.-F."/>
            <person name="Adams M.D."/>
            <person name="Reich C.I."/>
            <person name="Overbeek R."/>
            <person name="Kirkness E.F."/>
            <person name="Weinstock K.G."/>
            <person name="Merrick J.M."/>
            <person name="Glodek A."/>
            <person name="Scott J.L."/>
            <person name="Geoghagen N.S.M."/>
            <person name="Weidman J.F."/>
            <person name="Fuhrmann J.L."/>
            <person name="Nguyen D."/>
            <person name="Utterback T.R."/>
            <person name="Kelley J.M."/>
            <person name="Peterson J.D."/>
            <person name="Sadow P.W."/>
            <person name="Hanna M.C."/>
            <person name="Cotton M.D."/>
            <person name="Roberts K.M."/>
            <person name="Hurst M.A."/>
            <person name="Kaine B.P."/>
            <person name="Borodovsky M."/>
            <person name="Klenk H.-P."/>
            <person name="Fraser C.M."/>
            <person name="Smith H.O."/>
            <person name="Woese C.R."/>
            <person name="Venter J.C."/>
        </authorList>
    </citation>
    <scope>NUCLEOTIDE SEQUENCE [LARGE SCALE GENOMIC DNA]</scope>
    <source>
        <strain>ATCC 43067 / DSM 2661 / JAL-1 / JCM 10045 / NBRC 100440</strain>
    </source>
</reference>
<reference key="2">
    <citation type="journal article" date="2004" name="J. Mol. Biol.">
        <title>Distinct origins of tRNA(m1G37) methyltransferase.</title>
        <authorList>
            <person name="Christian T."/>
            <person name="Evilia C."/>
            <person name="Williams S."/>
            <person name="Hou Y.M."/>
        </authorList>
    </citation>
    <scope>FUNCTION</scope>
    <scope>CATALYTIC ACTIVITY</scope>
    <scope>SUBUNIT</scope>
</reference>
<reference key="3">
    <citation type="journal article" date="2006" name="Biochemistry">
        <title>Catalysis by the second class of tRNA(m1G37) methyl transferase requires a conserved proline.</title>
        <authorList>
            <person name="Christian T."/>
            <person name="Evilia C."/>
            <person name="Hou Y.M."/>
        </authorList>
    </citation>
    <scope>FUNCTION</scope>
    <scope>BIOPHYSICOCHEMICAL PROPERTIES</scope>
    <scope>MUTAGENESIS OF ARG-145; TYR-177; GLY-205; GLY-207; ASP-223; ASN-225; PRO-226; ASN-265 AND PRO-267</scope>
</reference>
<reference key="4">
    <citation type="journal article" date="2010" name="RNA">
        <title>Mechanism of N-methylation by the tRNA m1G37 methyltransferase Trm5.</title>
        <authorList>
            <person name="Christian T."/>
            <person name="Lahoud G."/>
            <person name="Liu C."/>
            <person name="Hoffmann K."/>
            <person name="Perona J.J."/>
            <person name="Hou Y.M."/>
        </authorList>
    </citation>
    <scope>FUNCTION</scope>
</reference>
<reference evidence="8" key="5">
    <citation type="journal article" date="2008" name="Proteins">
        <title>Crystal structure of archaeal tRNA(m(1)G37)methyltransferase aTrm5.</title>
        <authorList>
            <person name="Goto-Ito S."/>
            <person name="Ito T."/>
            <person name="Ishii R."/>
            <person name="Muto Y."/>
            <person name="Bessho Y."/>
            <person name="Yokoyama S."/>
        </authorList>
    </citation>
    <scope>X-RAY CRYSTALLOGRAPHY (2.2 ANGSTROMS)</scope>
    <scope>SUBUNIT</scope>
</reference>
<reference evidence="9 10" key="6">
    <citation type="journal article" date="2009" name="Nat. Struct. Mol. Biol.">
        <title>Tertiary structure checkpoint at anticodon loop modification in tRNA functional maturation.</title>
        <authorList>
            <person name="Goto-Ito S."/>
            <person name="Ito T."/>
            <person name="Kuratani M."/>
            <person name="Bessho Y."/>
            <person name="Yokoyama S."/>
        </authorList>
    </citation>
    <scope>X-RAY CRYSTALLOGRAPHY (2.65 ANGSTROMS) IN COMPLEX WITH S-ADENOSYL-L-METHIONINE AND TRNA</scope>
</reference>
<organism>
    <name type="scientific">Methanocaldococcus jannaschii (strain ATCC 43067 / DSM 2661 / JAL-1 / JCM 10045 / NBRC 100440)</name>
    <name type="common">Methanococcus jannaschii</name>
    <dbReference type="NCBI Taxonomy" id="243232"/>
    <lineage>
        <taxon>Archaea</taxon>
        <taxon>Methanobacteriati</taxon>
        <taxon>Methanobacteriota</taxon>
        <taxon>Methanomada group</taxon>
        <taxon>Methanococci</taxon>
        <taxon>Methanococcales</taxon>
        <taxon>Methanocaldococcaceae</taxon>
        <taxon>Methanocaldococcus</taxon>
    </lineage>
</organism>
<sequence length="336" mass="39000">MPLCLKINKKHGEQTRRILIENNLLNKDYKITSEGNYLYLPIKDVDEDILKSILNIEFELVDKELEEKKIIKKPSFREIISKKYRKEIDEGLISLSYDVVGDLVILQISDEVDEKIRKEIGELAYKLIPCKGVFRRKSEVKGEFRVRELEHLAGENRTLTIHKENGYRLWVDIAKVYFSPRLGGERARIMKKVSLNDVVVDMFAGVGPFSIACKNAKKIYAIDINPHAIELLKKNIKLNKLEHKIIPILSDVREVDVKGNRVIMNLPKFAHKFIDKALDIVEEGGVIHYYTIGKDFDKAIKLFEKKCDCEVLEKRIVKSYAPREYILALDFKINKK</sequence>
<accession>Q58293</accession>
<dbReference type="EC" id="2.1.1.228" evidence="2"/>
<dbReference type="EMBL" id="L77117">
    <property type="protein sequence ID" value="AAB98887.1"/>
    <property type="molecule type" value="Genomic_DNA"/>
</dbReference>
<dbReference type="PIR" id="C64410">
    <property type="entry name" value="C64410"/>
</dbReference>
<dbReference type="RefSeq" id="WP_010870397.1">
    <property type="nucleotide sequence ID" value="NC_000909.1"/>
</dbReference>
<dbReference type="PDB" id="2YX1">
    <property type="method" value="X-ray"/>
    <property type="resolution" value="2.20 A"/>
    <property type="chains" value="A/B=1-336"/>
</dbReference>
<dbReference type="PDB" id="2ZZM">
    <property type="method" value="X-ray"/>
    <property type="resolution" value="2.65 A"/>
    <property type="chains" value="A=1-336"/>
</dbReference>
<dbReference type="PDB" id="2ZZN">
    <property type="method" value="X-ray"/>
    <property type="resolution" value="2.95 A"/>
    <property type="chains" value="A/B=1-336"/>
</dbReference>
<dbReference type="PDB" id="3AY0">
    <property type="method" value="X-ray"/>
    <property type="resolution" value="3.05 A"/>
    <property type="chains" value="A/B=1-336"/>
</dbReference>
<dbReference type="PDBsum" id="2YX1"/>
<dbReference type="PDBsum" id="2ZZM"/>
<dbReference type="PDBsum" id="2ZZN"/>
<dbReference type="PDBsum" id="3AY0"/>
<dbReference type="SMR" id="Q58293"/>
<dbReference type="FunCoup" id="Q58293">
    <property type="interactions" value="6"/>
</dbReference>
<dbReference type="STRING" id="243232.MJ_0883"/>
<dbReference type="PaxDb" id="243232-MJ_0883"/>
<dbReference type="EnsemblBacteria" id="AAB98887">
    <property type="protein sequence ID" value="AAB98887"/>
    <property type="gene ID" value="MJ_0883"/>
</dbReference>
<dbReference type="GeneID" id="1451772"/>
<dbReference type="KEGG" id="mja:MJ_0883"/>
<dbReference type="eggNOG" id="arCOG00033">
    <property type="taxonomic scope" value="Archaea"/>
</dbReference>
<dbReference type="HOGENOM" id="CLU_022610_0_1_2"/>
<dbReference type="InParanoid" id="Q58293"/>
<dbReference type="OrthoDB" id="8079at2157"/>
<dbReference type="PhylomeDB" id="Q58293"/>
<dbReference type="BRENDA" id="2.1.1.228">
    <property type="organism ID" value="3260"/>
</dbReference>
<dbReference type="SABIO-RK" id="Q58293"/>
<dbReference type="EvolutionaryTrace" id="Q58293"/>
<dbReference type="PRO" id="PR:Q58293"/>
<dbReference type="Proteomes" id="UP000000805">
    <property type="component" value="Chromosome"/>
</dbReference>
<dbReference type="GO" id="GO:0005737">
    <property type="term" value="C:cytoplasm"/>
    <property type="evidence" value="ECO:0000318"/>
    <property type="project" value="GO_Central"/>
</dbReference>
<dbReference type="GO" id="GO:0052906">
    <property type="term" value="F:tRNA (guanine(37)-N1)-methyltransferase activity"/>
    <property type="evidence" value="ECO:0000314"/>
    <property type="project" value="UniProtKB"/>
</dbReference>
<dbReference type="GO" id="GO:0008175">
    <property type="term" value="F:tRNA methyltransferase activity"/>
    <property type="evidence" value="ECO:0000318"/>
    <property type="project" value="GO_Central"/>
</dbReference>
<dbReference type="GO" id="GO:0030488">
    <property type="term" value="P:tRNA methylation"/>
    <property type="evidence" value="ECO:0000314"/>
    <property type="project" value="UniProtKB"/>
</dbReference>
<dbReference type="GO" id="GO:0002939">
    <property type="term" value="P:tRNA N1-guanine methylation"/>
    <property type="evidence" value="ECO:0000318"/>
    <property type="project" value="GO_Central"/>
</dbReference>
<dbReference type="CDD" id="cd02440">
    <property type="entry name" value="AdoMet_MTases"/>
    <property type="match status" value="1"/>
</dbReference>
<dbReference type="FunFam" id="3.30.300.110:FF:000001">
    <property type="entry name" value="tRNA (guanine(37)-N1)-methyltransferase"/>
    <property type="match status" value="1"/>
</dbReference>
<dbReference type="FunFam" id="3.30.70.2580:FF:000001">
    <property type="entry name" value="tRNA (guanine(37)-N1)-methyltransferase Trm5b"/>
    <property type="match status" value="1"/>
</dbReference>
<dbReference type="FunFam" id="3.40.50.150:FF:000131">
    <property type="entry name" value="tRNA wybutosine-synthesizing protein 2/3/4"/>
    <property type="match status" value="1"/>
</dbReference>
<dbReference type="Gene3D" id="3.30.70.2580">
    <property type="match status" value="1"/>
</dbReference>
<dbReference type="Gene3D" id="3.30.300.110">
    <property type="entry name" value="Met-10+ protein-like domains"/>
    <property type="match status" value="1"/>
</dbReference>
<dbReference type="Gene3D" id="3.40.50.150">
    <property type="entry name" value="Vaccinia Virus protein VP39"/>
    <property type="match status" value="1"/>
</dbReference>
<dbReference type="InterPro" id="IPR030382">
    <property type="entry name" value="MeTrfase_TRM5/TYW2"/>
</dbReference>
<dbReference type="InterPro" id="IPR029063">
    <property type="entry name" value="SAM-dependent_MTases_sf"/>
</dbReference>
<dbReference type="InterPro" id="IPR056743">
    <property type="entry name" value="TRM5-TYW2-like_MTfase"/>
</dbReference>
<dbReference type="InterPro" id="IPR056744">
    <property type="entry name" value="TRM5/TYW2-like_N"/>
</dbReference>
<dbReference type="InterPro" id="IPR040601">
    <property type="entry name" value="Trm5a/b_N"/>
</dbReference>
<dbReference type="NCBIfam" id="NF047732">
    <property type="entry name" value="tRNAMtaseTrm5bMeth"/>
    <property type="match status" value="1"/>
</dbReference>
<dbReference type="PANTHER" id="PTHR23245:SF36">
    <property type="entry name" value="TRNA (GUANINE(37)-N1)-METHYLTRANSFERASE"/>
    <property type="match status" value="1"/>
</dbReference>
<dbReference type="PANTHER" id="PTHR23245">
    <property type="entry name" value="TRNA METHYLTRANSFERASE"/>
    <property type="match status" value="1"/>
</dbReference>
<dbReference type="Pfam" id="PF02475">
    <property type="entry name" value="TRM5-TYW2_MTfase"/>
    <property type="match status" value="1"/>
</dbReference>
<dbReference type="Pfam" id="PF18093">
    <property type="entry name" value="Trm5_N"/>
    <property type="match status" value="1"/>
</dbReference>
<dbReference type="Pfam" id="PF25133">
    <property type="entry name" value="TYW2_N_2"/>
    <property type="match status" value="1"/>
</dbReference>
<dbReference type="SUPFAM" id="SSF53335">
    <property type="entry name" value="S-adenosyl-L-methionine-dependent methyltransferases"/>
    <property type="match status" value="1"/>
</dbReference>
<dbReference type="PROSITE" id="PS51684">
    <property type="entry name" value="SAM_MT_TRM5_TYW2"/>
    <property type="match status" value="1"/>
</dbReference>
<proteinExistence type="evidence at protein level"/>
<evidence type="ECO:0000255" key="1">
    <source>
        <dbReference type="PROSITE-ProRule" id="PRU01021"/>
    </source>
</evidence>
<evidence type="ECO:0000269" key="2">
    <source>
    </source>
</evidence>
<evidence type="ECO:0000269" key="3">
    <source>
    </source>
</evidence>
<evidence type="ECO:0000269" key="4">
    <source>
    </source>
</evidence>
<evidence type="ECO:0000269" key="5">
    <source>
    </source>
</evidence>
<evidence type="ECO:0000269" key="6">
    <source>
    </source>
</evidence>
<evidence type="ECO:0000305" key="7"/>
<evidence type="ECO:0007744" key="8">
    <source>
        <dbReference type="PDB" id="2YX1"/>
    </source>
</evidence>
<evidence type="ECO:0007744" key="9">
    <source>
        <dbReference type="PDB" id="2ZZM"/>
    </source>
</evidence>
<evidence type="ECO:0007744" key="10">
    <source>
        <dbReference type="PDB" id="2ZZN"/>
    </source>
</evidence>
<evidence type="ECO:0007829" key="11">
    <source>
        <dbReference type="PDB" id="2YX1"/>
    </source>
</evidence>
<evidence type="ECO:0007829" key="12">
    <source>
        <dbReference type="PDB" id="2ZZM"/>
    </source>
</evidence>
<evidence type="ECO:0007829" key="13">
    <source>
        <dbReference type="PDB" id="3AY0"/>
    </source>
</evidence>
<gene>
    <name type="primary">trm5b</name>
    <name type="ordered locus">MJ0883</name>
</gene>
<comment type="function">
    <text evidence="2 3 6">Specifically methylates the N1 position of guanosine-37 in various tRNAs.</text>
</comment>
<comment type="catalytic activity">
    <reaction evidence="2">
        <text>guanosine(37) in tRNA + S-adenosyl-L-methionine = N(1)-methylguanosine(37) in tRNA + S-adenosyl-L-homocysteine + H(+)</text>
        <dbReference type="Rhea" id="RHEA:36899"/>
        <dbReference type="Rhea" id="RHEA-COMP:10145"/>
        <dbReference type="Rhea" id="RHEA-COMP:10147"/>
        <dbReference type="ChEBI" id="CHEBI:15378"/>
        <dbReference type="ChEBI" id="CHEBI:57856"/>
        <dbReference type="ChEBI" id="CHEBI:59789"/>
        <dbReference type="ChEBI" id="CHEBI:73542"/>
        <dbReference type="ChEBI" id="CHEBI:74269"/>
        <dbReference type="EC" id="2.1.1.228"/>
    </reaction>
</comment>
<comment type="biophysicochemical properties">
    <kinetics>
        <KM evidence="3">1 uM for S-adenosyl-L-methionine</KM>
        <KM evidence="3">0.7 uM for tRNA</KM>
    </kinetics>
</comment>
<comment type="subunit">
    <text evidence="2 4 5">Monomer.</text>
</comment>
<comment type="subcellular location">
    <subcellularLocation>
        <location evidence="7">Cytoplasm</location>
    </subcellularLocation>
</comment>
<comment type="similarity">
    <text evidence="1">Belongs to the class I-like SAM-binding methyltransferase superfamily. TRM5/TYW2 family.</text>
</comment>
<feature type="chain" id="PRO_0000107090" description="tRNA (guanine(37)-N(1))-methyltransferase Trm5b">
    <location>
        <begin position="1"/>
        <end position="336"/>
    </location>
</feature>
<feature type="binding site" evidence="1 5">
    <location>
        <position position="186"/>
    </location>
    <ligand>
        <name>S-adenosyl-L-methionine</name>
        <dbReference type="ChEBI" id="CHEBI:59789"/>
    </ligand>
</feature>
<feature type="binding site" evidence="1 5">
    <location>
        <begin position="223"/>
        <end position="224"/>
    </location>
    <ligand>
        <name>S-adenosyl-L-methionine</name>
        <dbReference type="ChEBI" id="CHEBI:59789"/>
    </ligand>
</feature>
<feature type="binding site" evidence="1 5">
    <location>
        <begin position="251"/>
        <end position="252"/>
    </location>
    <ligand>
        <name>S-adenosyl-L-methionine</name>
        <dbReference type="ChEBI" id="CHEBI:59789"/>
    </ligand>
</feature>
<feature type="binding site" evidence="1 5">
    <location>
        <position position="265"/>
    </location>
    <ligand>
        <name>S-adenosyl-L-methionine</name>
        <dbReference type="ChEBI" id="CHEBI:59789"/>
    </ligand>
</feature>
<feature type="mutagenesis site" description="16-fold decrease in methyltransferase activity. Lack of tRNA-binding." evidence="3">
    <original>R</original>
    <variation>A</variation>
    <location>
        <position position="145"/>
    </location>
</feature>
<feature type="mutagenesis site" description="20-fold decrease in methyltransferase activity. Reduced affinity for tRNA." evidence="3">
    <original>Y</original>
    <variation>A</variation>
    <location>
        <position position="177"/>
    </location>
</feature>
<feature type="mutagenesis site" description="33-fold decrease in methyltransferase activity and reduced affinity for tRNA; when associated with A-207." evidence="3">
    <original>G</original>
    <variation>A</variation>
    <location>
        <position position="205"/>
    </location>
</feature>
<feature type="mutagenesis site" description="33-fold decrease in methyltransferase activity and reduced affinity for tRNA; when associated with A-205." evidence="3">
    <original>G</original>
    <variation>A</variation>
    <location>
        <position position="207"/>
    </location>
</feature>
<feature type="mutagenesis site" description="100-fold decrease in methyltransferase activity. Lack of tRNA-binding." evidence="3">
    <original>D</original>
    <variation>A</variation>
    <location>
        <position position="223"/>
    </location>
</feature>
<feature type="mutagenesis site" description="20-fold decrease in methyltransferase activity." evidence="3">
    <original>N</original>
    <variation>A</variation>
    <location>
        <position position="225"/>
    </location>
</feature>
<feature type="mutagenesis site" description="16-fold decrease in methyltransferase activity." evidence="3">
    <original>P</original>
    <variation>A</variation>
    <location>
        <position position="226"/>
    </location>
</feature>
<feature type="mutagenesis site" description="100-fold decrease in methyltransferase activity." evidence="3">
    <original>N</original>
    <variation>A</variation>
    <variation>Q</variation>
    <location>
        <position position="265"/>
    </location>
</feature>
<feature type="mutagenesis site" description="3-fold decrease in methyltransferase activity." evidence="3">
    <original>N</original>
    <variation>H</variation>
    <location>
        <position position="265"/>
    </location>
</feature>
<feature type="mutagenesis site" description="1000-fold decrease in methyltransferase activity. No change in affinity for tRNA." evidence="3">
    <original>P</original>
    <variation>A</variation>
    <location>
        <position position="267"/>
    </location>
</feature>
<feature type="strand" evidence="11">
    <location>
        <begin position="3"/>
        <end position="8"/>
    </location>
</feature>
<feature type="helix" evidence="11">
    <location>
        <begin position="9"/>
        <end position="11"/>
    </location>
</feature>
<feature type="helix" evidence="11">
    <location>
        <begin position="12"/>
        <end position="21"/>
    </location>
</feature>
<feature type="strand" evidence="12">
    <location>
        <begin position="27"/>
        <end position="29"/>
    </location>
</feature>
<feature type="strand" evidence="11">
    <location>
        <begin position="32"/>
        <end position="34"/>
    </location>
</feature>
<feature type="strand" evidence="11">
    <location>
        <begin position="37"/>
        <end position="42"/>
    </location>
</feature>
<feature type="helix" evidence="11">
    <location>
        <begin position="47"/>
        <end position="50"/>
    </location>
</feature>
<feature type="turn" evidence="11">
    <location>
        <begin position="51"/>
        <end position="53"/>
    </location>
</feature>
<feature type="strand" evidence="11">
    <location>
        <begin position="59"/>
        <end position="62"/>
    </location>
</feature>
<feature type="helix" evidence="11">
    <location>
        <begin position="77"/>
        <end position="83"/>
    </location>
</feature>
<feature type="helix" evidence="11">
    <location>
        <begin position="85"/>
        <end position="88"/>
    </location>
</feature>
<feature type="strand" evidence="11">
    <location>
        <begin position="91"/>
        <end position="93"/>
    </location>
</feature>
<feature type="strand" evidence="11">
    <location>
        <begin position="98"/>
        <end position="100"/>
    </location>
</feature>
<feature type="strand" evidence="11">
    <location>
        <begin position="103"/>
        <end position="106"/>
    </location>
</feature>
<feature type="strand" evidence="13">
    <location>
        <begin position="110"/>
        <end position="112"/>
    </location>
</feature>
<feature type="helix" evidence="11">
    <location>
        <begin position="114"/>
        <end position="127"/>
    </location>
</feature>
<feature type="strand" evidence="11">
    <location>
        <begin position="131"/>
        <end position="136"/>
    </location>
</feature>
<feature type="turn" evidence="12">
    <location>
        <begin position="142"/>
        <end position="145"/>
    </location>
</feature>
<feature type="strand" evidence="11">
    <location>
        <begin position="149"/>
        <end position="154"/>
    </location>
</feature>
<feature type="strand" evidence="11">
    <location>
        <begin position="159"/>
        <end position="164"/>
    </location>
</feature>
<feature type="strand" evidence="11">
    <location>
        <begin position="167"/>
        <end position="172"/>
    </location>
</feature>
<feature type="turn" evidence="11">
    <location>
        <begin position="173"/>
        <end position="175"/>
    </location>
</feature>
<feature type="helix" evidence="11">
    <location>
        <begin position="180"/>
        <end position="182"/>
    </location>
</feature>
<feature type="helix" evidence="11">
    <location>
        <begin position="183"/>
        <end position="192"/>
    </location>
</feature>
<feature type="strand" evidence="11">
    <location>
        <begin position="198"/>
        <end position="201"/>
    </location>
</feature>
<feature type="helix" evidence="11">
    <location>
        <begin position="208"/>
        <end position="212"/>
    </location>
</feature>
<feature type="turn" evidence="11">
    <location>
        <begin position="213"/>
        <end position="215"/>
    </location>
</feature>
<feature type="strand" evidence="11">
    <location>
        <begin position="216"/>
        <end position="224"/>
    </location>
</feature>
<feature type="helix" evidence="11">
    <location>
        <begin position="226"/>
        <end position="238"/>
    </location>
</feature>
<feature type="turn" evidence="11">
    <location>
        <begin position="242"/>
        <end position="244"/>
    </location>
</feature>
<feature type="strand" evidence="11">
    <location>
        <begin position="245"/>
        <end position="250"/>
    </location>
</feature>
<feature type="helix" evidence="11">
    <location>
        <begin position="252"/>
        <end position="254"/>
    </location>
</feature>
<feature type="strand" evidence="11">
    <location>
        <begin position="259"/>
        <end position="264"/>
    </location>
</feature>
<feature type="turn" evidence="11">
    <location>
        <begin position="267"/>
        <end position="269"/>
    </location>
</feature>
<feature type="helix" evidence="11">
    <location>
        <begin position="270"/>
        <end position="273"/>
    </location>
</feature>
<feature type="helix" evidence="11">
    <location>
        <begin position="274"/>
        <end position="280"/>
    </location>
</feature>
<feature type="strand" evidence="11">
    <location>
        <begin position="281"/>
        <end position="296"/>
    </location>
</feature>
<feature type="helix" evidence="11">
    <location>
        <begin position="297"/>
        <end position="306"/>
    </location>
</feature>
<feature type="strand" evidence="11">
    <location>
        <begin position="307"/>
        <end position="321"/>
    </location>
</feature>
<feature type="strand" evidence="11">
    <location>
        <begin position="324"/>
        <end position="335"/>
    </location>
</feature>
<keyword id="KW-0002">3D-structure</keyword>
<keyword id="KW-0963">Cytoplasm</keyword>
<keyword id="KW-0489">Methyltransferase</keyword>
<keyword id="KW-1185">Reference proteome</keyword>
<keyword id="KW-0949">S-adenosyl-L-methionine</keyword>
<keyword id="KW-0808">Transferase</keyword>
<keyword id="KW-0819">tRNA processing</keyword>
<name>TRM5B_METJA</name>
<protein>
    <recommendedName>
        <fullName>tRNA (guanine(37)-N(1))-methyltransferase Trm5b</fullName>
        <ecNumber evidence="2">2.1.1.228</ecNumber>
    </recommendedName>
    <alternativeName>
        <fullName>M1G-methyltransferase</fullName>
    </alternativeName>
    <alternativeName>
        <fullName>tRNA [GM37] methyltransferase</fullName>
    </alternativeName>
</protein>